<keyword id="KW-0106">Calcium</keyword>
<keyword id="KW-0130">Cell adhesion</keyword>
<keyword id="KW-1003">Cell membrane</keyword>
<keyword id="KW-0966">Cell projection</keyword>
<keyword id="KW-0256">Endoplasmic reticulum</keyword>
<keyword id="KW-0325">Glycoprotein</keyword>
<keyword id="KW-0333">Golgi apparatus</keyword>
<keyword id="KW-0472">Membrane</keyword>
<keyword id="KW-0628">Postsynaptic cell membrane</keyword>
<keyword id="KW-1185">Reference proteome</keyword>
<keyword id="KW-0677">Repeat</keyword>
<keyword id="KW-0732">Signal</keyword>
<keyword id="KW-0770">Synapse</keyword>
<keyword id="KW-0812">Transmembrane</keyword>
<keyword id="KW-1133">Transmembrane helix</keyword>
<feature type="signal peptide" evidence="4">
    <location>
        <begin position="1"/>
        <end position="22"/>
    </location>
</feature>
<feature type="chain" id="PRO_5035035163" description="Calsyntenin-2" evidence="4">
    <location>
        <begin position="23"/>
        <end position="937"/>
    </location>
</feature>
<feature type="topological domain" description="Extracellular" evidence="10">
    <location>
        <begin position="23"/>
        <end position="818"/>
    </location>
</feature>
<feature type="transmembrane region" description="Helical" evidence="4">
    <location>
        <begin position="819"/>
        <end position="839"/>
    </location>
</feature>
<feature type="topological domain" description="Cytoplasmic" evidence="10">
    <location>
        <begin position="840"/>
        <end position="937"/>
    </location>
</feature>
<feature type="domain" description="Cadherin 1" evidence="5">
    <location>
        <begin position="32"/>
        <end position="148"/>
    </location>
</feature>
<feature type="domain" description="Cadherin 2" evidence="5">
    <location>
        <begin position="149"/>
        <end position="249"/>
    </location>
</feature>
<feature type="region of interest" description="Disordered" evidence="7">
    <location>
        <begin position="846"/>
        <end position="937"/>
    </location>
</feature>
<feature type="compositionally biased region" description="Polar residues" evidence="7">
    <location>
        <begin position="865"/>
        <end position="874"/>
    </location>
</feature>
<feature type="compositionally biased region" description="Acidic residues" evidence="7">
    <location>
        <begin position="881"/>
        <end position="900"/>
    </location>
</feature>
<feature type="compositionally biased region" description="Acidic residues" evidence="7">
    <location>
        <begin position="907"/>
        <end position="917"/>
    </location>
</feature>
<feature type="glycosylation site" description="N-linked (GlcNAc...) asparagine" evidence="6">
    <location>
        <position position="86"/>
    </location>
</feature>
<feature type="glycosylation site" description="N-linked (GlcNAc...) asparagine" evidence="6">
    <location>
        <position position="330"/>
    </location>
</feature>
<feature type="glycosylation site" description="N-linked (GlcNAc...) asparagine" evidence="6">
    <location>
        <position position="365"/>
    </location>
</feature>
<feature type="glycosylation site" description="N-linked (GlcNAc...) asparagine" evidence="6">
    <location>
        <position position="716"/>
    </location>
</feature>
<accession>B0S5G3</accession>
<accession>A0A8M1NSU0</accession>
<organism>
    <name type="scientific">Danio rerio</name>
    <name type="common">Zebrafish</name>
    <name type="synonym">Brachydanio rerio</name>
    <dbReference type="NCBI Taxonomy" id="7955"/>
    <lineage>
        <taxon>Eukaryota</taxon>
        <taxon>Metazoa</taxon>
        <taxon>Chordata</taxon>
        <taxon>Craniata</taxon>
        <taxon>Vertebrata</taxon>
        <taxon>Euteleostomi</taxon>
        <taxon>Actinopterygii</taxon>
        <taxon>Neopterygii</taxon>
        <taxon>Teleostei</taxon>
        <taxon>Ostariophysi</taxon>
        <taxon>Cypriniformes</taxon>
        <taxon>Danionidae</taxon>
        <taxon>Danioninae</taxon>
        <taxon>Danio</taxon>
    </lineage>
</organism>
<comment type="function">
    <text evidence="1 8">Postsynaptic adhesion molecule (PubMed:25463516). Promotes synapse development by acting as a cell adhesion molecule at the postsynaptic membrane, which associates with presynaptic neurexins (By similarity).</text>
</comment>
<comment type="subunit">
    <text evidence="8">Homooligomer and heterooligomer; mediates both homophilic and heterophilc interactions with clstn1 and clstn3 paralogs via cadherin domains.</text>
</comment>
<comment type="subcellular location">
    <subcellularLocation>
        <location evidence="3">Postsynaptic cell membrane</location>
        <topology evidence="4">Single-pass type I membrane protein</topology>
    </subcellularLocation>
    <subcellularLocation>
        <location evidence="3">Endoplasmic reticulum membrane</location>
        <topology evidence="4">Single-pass type I membrane protein</topology>
    </subcellularLocation>
    <subcellularLocation>
        <location evidence="3">Golgi apparatus membrane</location>
        <topology evidence="4">Single-pass type I membrane protein</topology>
    </subcellularLocation>
    <subcellularLocation>
        <location evidence="3">Cell projection</location>
        <location evidence="3">Dendrite</location>
    </subcellularLocation>
    <text evidence="3">Most prominent in the postsynaptic specializations of asymmetric (type I) synapses with both axodendritic and axospinous localization.</text>
</comment>
<comment type="tissue specificity">
    <text evidence="8">By 48 hours post-fertilization (hpf), widely expressed in the brain, with strong expression in the telencephalon and the midbrain.</text>
</comment>
<comment type="developmental stage">
    <text evidence="8">Expression is detected at 4.5 hours post-fertilization (hpf) (PubMed:25463516). During development, weakly expressed in the brain, with some expression detectable in the telencephalon and diencephalon (PubMed:25463516). In the spinal cord, expression is restricted to an array of large dorsal neurons and small clusters of ventral neurons, likely Rohon-Beard cells and primary motoneurons, respectively (PubMed:25463516).</text>
</comment>
<comment type="domain">
    <text evidence="2">Binds synaptic Ca(2+) with its cytoplasmic domain.</text>
</comment>
<comment type="similarity">
    <text evidence="10">Belongs to the calsyntenin family.</text>
</comment>
<reference key="1">
    <citation type="journal article" date="2013" name="Nature">
        <title>The zebrafish reference genome sequence and its relationship to the human genome.</title>
        <authorList>
            <person name="Howe K."/>
            <person name="Clark M.D."/>
            <person name="Torroja C.F."/>
            <person name="Torrance J."/>
            <person name="Berthelot C."/>
            <person name="Muffato M."/>
            <person name="Collins J.E."/>
            <person name="Humphray S."/>
            <person name="McLaren K."/>
            <person name="Matthews L."/>
            <person name="McLaren S."/>
            <person name="Sealy I."/>
            <person name="Caccamo M."/>
            <person name="Churcher C."/>
            <person name="Scott C."/>
            <person name="Barrett J.C."/>
            <person name="Koch R."/>
            <person name="Rauch G.J."/>
            <person name="White S."/>
            <person name="Chow W."/>
            <person name="Kilian B."/>
            <person name="Quintais L.T."/>
            <person name="Guerra-Assuncao J.A."/>
            <person name="Zhou Y."/>
            <person name="Gu Y."/>
            <person name="Yen J."/>
            <person name="Vogel J.H."/>
            <person name="Eyre T."/>
            <person name="Redmond S."/>
            <person name="Banerjee R."/>
            <person name="Chi J."/>
            <person name="Fu B."/>
            <person name="Langley E."/>
            <person name="Maguire S.F."/>
            <person name="Laird G.K."/>
            <person name="Lloyd D."/>
            <person name="Kenyon E."/>
            <person name="Donaldson S."/>
            <person name="Sehra H."/>
            <person name="Almeida-King J."/>
            <person name="Loveland J."/>
            <person name="Trevanion S."/>
            <person name="Jones M."/>
            <person name="Quail M."/>
            <person name="Willey D."/>
            <person name="Hunt A."/>
            <person name="Burton J."/>
            <person name="Sims S."/>
            <person name="McLay K."/>
            <person name="Plumb B."/>
            <person name="Davis J."/>
            <person name="Clee C."/>
            <person name="Oliver K."/>
            <person name="Clark R."/>
            <person name="Riddle C."/>
            <person name="Elliot D."/>
            <person name="Threadgold G."/>
            <person name="Harden G."/>
            <person name="Ware D."/>
            <person name="Begum S."/>
            <person name="Mortimore B."/>
            <person name="Kerry G."/>
            <person name="Heath P."/>
            <person name="Phillimore B."/>
            <person name="Tracey A."/>
            <person name="Corby N."/>
            <person name="Dunn M."/>
            <person name="Johnson C."/>
            <person name="Wood J."/>
            <person name="Clark S."/>
            <person name="Pelan S."/>
            <person name="Griffiths G."/>
            <person name="Smith M."/>
            <person name="Glithero R."/>
            <person name="Howden P."/>
            <person name="Barker N."/>
            <person name="Lloyd C."/>
            <person name="Stevens C."/>
            <person name="Harley J."/>
            <person name="Holt K."/>
            <person name="Panagiotidis G."/>
            <person name="Lovell J."/>
            <person name="Beasley H."/>
            <person name="Henderson C."/>
            <person name="Gordon D."/>
            <person name="Auger K."/>
            <person name="Wright D."/>
            <person name="Collins J."/>
            <person name="Raisen C."/>
            <person name="Dyer L."/>
            <person name="Leung K."/>
            <person name="Robertson L."/>
            <person name="Ambridge K."/>
            <person name="Leongamornlert D."/>
            <person name="McGuire S."/>
            <person name="Gilderthorp R."/>
            <person name="Griffiths C."/>
            <person name="Manthravadi D."/>
            <person name="Nichol S."/>
            <person name="Barker G."/>
            <person name="Whitehead S."/>
            <person name="Kay M."/>
            <person name="Brown J."/>
            <person name="Murnane C."/>
            <person name="Gray E."/>
            <person name="Humphries M."/>
            <person name="Sycamore N."/>
            <person name="Barker D."/>
            <person name="Saunders D."/>
            <person name="Wallis J."/>
            <person name="Babbage A."/>
            <person name="Hammond S."/>
            <person name="Mashreghi-Mohammadi M."/>
            <person name="Barr L."/>
            <person name="Martin S."/>
            <person name="Wray P."/>
            <person name="Ellington A."/>
            <person name="Matthews N."/>
            <person name="Ellwood M."/>
            <person name="Woodmansey R."/>
            <person name="Clark G."/>
            <person name="Cooper J."/>
            <person name="Tromans A."/>
            <person name="Grafham D."/>
            <person name="Skuce C."/>
            <person name="Pandian R."/>
            <person name="Andrews R."/>
            <person name="Harrison E."/>
            <person name="Kimberley A."/>
            <person name="Garnett J."/>
            <person name="Fosker N."/>
            <person name="Hall R."/>
            <person name="Garner P."/>
            <person name="Kelly D."/>
            <person name="Bird C."/>
            <person name="Palmer S."/>
            <person name="Gehring I."/>
            <person name="Berger A."/>
            <person name="Dooley C.M."/>
            <person name="Ersan-Urun Z."/>
            <person name="Eser C."/>
            <person name="Geiger H."/>
            <person name="Geisler M."/>
            <person name="Karotki L."/>
            <person name="Kirn A."/>
            <person name="Konantz J."/>
            <person name="Konantz M."/>
            <person name="Oberlander M."/>
            <person name="Rudolph-Geiger S."/>
            <person name="Teucke M."/>
            <person name="Lanz C."/>
            <person name="Raddatz G."/>
            <person name="Osoegawa K."/>
            <person name="Zhu B."/>
            <person name="Rapp A."/>
            <person name="Widaa S."/>
            <person name="Langford C."/>
            <person name="Yang F."/>
            <person name="Schuster S.C."/>
            <person name="Carter N.P."/>
            <person name="Harrow J."/>
            <person name="Ning Z."/>
            <person name="Herrero J."/>
            <person name="Searle S.M."/>
            <person name="Enright A."/>
            <person name="Geisler R."/>
            <person name="Plasterk R.H."/>
            <person name="Lee C."/>
            <person name="Westerfield M."/>
            <person name="de Jong P.J."/>
            <person name="Zon L.I."/>
            <person name="Postlethwait J.H."/>
            <person name="Nusslein-Volhard C."/>
            <person name="Hubbard T.J."/>
            <person name="Roest Crollius H."/>
            <person name="Rogers J."/>
            <person name="Stemple D.L."/>
        </authorList>
    </citation>
    <scope>NUCLEOTIDE SEQUENCE [LARGE SCALE GENOMIC DNA]</scope>
    <source>
        <strain>Tuebingen</strain>
    </source>
</reference>
<reference key="2">
    <citation type="journal article" date="2015" name="Neuroscience">
        <title>Zebrafish calsyntenins mediate homophilic adhesion through their amino-terminal cadherin repeats.</title>
        <authorList>
            <person name="Ortiz-Medina H."/>
            <person name="Emond M.R."/>
            <person name="Jontes J.D."/>
        </authorList>
    </citation>
    <scope>FUNCTION</scope>
    <scope>SUBUNIT</scope>
    <scope>TISSUE SPECIFICITY</scope>
    <scope>DEVELOPMENTAL STAGE</scope>
</reference>
<sequence>MKMRAITAMLLLVLSGQCGILAGKVNKHKPWIETSYHGVITENMDTVMLDPPLVALDKDAPVPYAGEICAFKIHGQEAPFEAEVLNRTSGEGVLRARGPIDCEQQKEYTFIIQAYDCGASPNGADWKKSHKAVVHIQVDDVNEFSPVFREPLYRATVTEGKIYDSILQVEAWDQDCSPQYSQICNYEIVTQDTPFAIDRNGNIRNTERLSFDKQQHYKIMVTAYDCGQKRAMESVPVHIDVKPVCKPGWQGWNKRVDYEPGTGSKQLFPKMHLETCDGPLSSVRAMVELQTSHIGKGCDRETYSEKSLQKLCGAASGSTDLLPAPSTSTNWTASLLTDSGRDSDLIFRFDGRQAANIPDWVVPQNLTDQFTIATWMKHGPSPGLRAEKETLLCNSDKTEMNRHHYSLYVHNCRLVFLLRRDFIQLDSFRPAEFHWRLEQICDKEWHYYVINVEFPSVTLFVDGVTYEPYLVTDDWPIHPSEIDVQLTVGACWQGGEVTTPRFTQYFRGSLSGLTIRPGKIATQKVISCLQACKEGLDISSLESLGKGIKFHFNPAQSVLVMEADDLESINTAMTKVSYINSRQFPTPGLRKLHITTTVQCFGEDTCISIPEIKAMVMVLPPSEPRITIAGVERLVWPSAQLRAPVGVALFKDIHIISTVTKTDATLSIARRPGVLELMHNLDYCDVLVIGEELDPERESLEIHHSSLLGKHLDATNSTSGISIYGVDSMAHYEQAIRQVRYRNWKPGSLSERRFRLSCSELNGRYTSNEFNLEIGVVHSSEAVEHVNHMAVQSQFMRPVHHPLVVHTVNSDHISGTPPAATVVIVMCIAALVVIVVLGIYRIHTTHQDSSKEDEEERKDPEMDWDNSNLNSIEGTQIAEEVREEEPEEDEDEDEEDDDLAGDLSSAESEDSDEDEETNIQKGKVKGKLEWDPSTLPY</sequence>
<name>CSTN2_DANRE</name>
<gene>
    <name type="primary">clstn2a</name>
    <name evidence="9" type="synonym">clstn2</name>
</gene>
<evidence type="ECO:0000250" key="1">
    <source>
        <dbReference type="UniProtKB" id="Q99JH7"/>
    </source>
</evidence>
<evidence type="ECO:0000250" key="2">
    <source>
        <dbReference type="UniProtKB" id="Q9EPL2"/>
    </source>
</evidence>
<evidence type="ECO:0000250" key="3">
    <source>
        <dbReference type="UniProtKB" id="Q9ER65"/>
    </source>
</evidence>
<evidence type="ECO:0000255" key="4"/>
<evidence type="ECO:0000255" key="5">
    <source>
        <dbReference type="PROSITE-ProRule" id="PRU00043"/>
    </source>
</evidence>
<evidence type="ECO:0000255" key="6">
    <source>
        <dbReference type="PROSITE-ProRule" id="PRU00498"/>
    </source>
</evidence>
<evidence type="ECO:0000256" key="7">
    <source>
        <dbReference type="SAM" id="MobiDB-lite"/>
    </source>
</evidence>
<evidence type="ECO:0000269" key="8">
    <source>
    </source>
</evidence>
<evidence type="ECO:0000303" key="9">
    <source>
    </source>
</evidence>
<evidence type="ECO:0000305" key="10"/>
<proteinExistence type="evidence at protein level"/>
<protein>
    <recommendedName>
        <fullName evidence="9">Calsyntenin-2</fullName>
    </recommendedName>
</protein>
<dbReference type="EMBL" id="BX248328">
    <property type="status" value="NOT_ANNOTATED_CDS"/>
    <property type="molecule type" value="Genomic_DNA"/>
</dbReference>
<dbReference type="EMBL" id="BX322588">
    <property type="status" value="NOT_ANNOTATED_CDS"/>
    <property type="molecule type" value="Genomic_DNA"/>
</dbReference>
<dbReference type="EMBL" id="CR936405">
    <property type="status" value="NOT_ANNOTATED_CDS"/>
    <property type="molecule type" value="Genomic_DNA"/>
</dbReference>
<dbReference type="EMBL" id="CT027691">
    <property type="status" value="NOT_ANNOTATED_CDS"/>
    <property type="molecule type" value="Genomic_DNA"/>
</dbReference>
<dbReference type="EMBL" id="CU179756">
    <property type="status" value="NOT_ANNOTATED_CDS"/>
    <property type="molecule type" value="Genomic_DNA"/>
</dbReference>
<dbReference type="EMBL" id="CU693456">
    <property type="status" value="NOT_ANNOTATED_CDS"/>
    <property type="molecule type" value="Genomic_DNA"/>
</dbReference>
<dbReference type="RefSeq" id="NP_001153311.1">
    <property type="nucleotide sequence ID" value="NM_001159839.1"/>
</dbReference>
<dbReference type="SMR" id="B0S5G3"/>
<dbReference type="FunCoup" id="B0S5G3">
    <property type="interactions" value="723"/>
</dbReference>
<dbReference type="STRING" id="7955.ENSDARP00000080110"/>
<dbReference type="PaxDb" id="7955-ENSDARP00000080110"/>
<dbReference type="Ensembl" id="ENSDART00000085675">
    <property type="protein sequence ID" value="ENSDARP00000080110"/>
    <property type="gene ID" value="ENSDARG00000060637"/>
</dbReference>
<dbReference type="GeneID" id="100125749"/>
<dbReference type="KEGG" id="dre:100125749"/>
<dbReference type="AGR" id="ZFIN:ZDB-GENE-070911-2"/>
<dbReference type="CTD" id="100125749"/>
<dbReference type="ZFIN" id="ZDB-GENE-070911-2">
    <property type="gene designation" value="clstn2a"/>
</dbReference>
<dbReference type="eggNOG" id="KOG1834">
    <property type="taxonomic scope" value="Eukaryota"/>
</dbReference>
<dbReference type="InParanoid" id="B0S5G3"/>
<dbReference type="OMA" id="PMEDMRG"/>
<dbReference type="OrthoDB" id="10012272at2759"/>
<dbReference type="TreeFam" id="TF315946"/>
<dbReference type="ChiTaRS" id="clstn2">
    <property type="organism name" value="zebrafish"/>
</dbReference>
<dbReference type="PRO" id="PR:B0S5G3"/>
<dbReference type="Proteomes" id="UP000000437">
    <property type="component" value="Alternate scaffold 2"/>
</dbReference>
<dbReference type="Proteomes" id="UP000000437">
    <property type="component" value="Chromosome 2"/>
</dbReference>
<dbReference type="Bgee" id="ENSDARG00000060637">
    <property type="expression patterns" value="Expressed in retina and 16 other cell types or tissues"/>
</dbReference>
<dbReference type="GO" id="GO:0009986">
    <property type="term" value="C:cell surface"/>
    <property type="evidence" value="ECO:0000318"/>
    <property type="project" value="GO_Central"/>
</dbReference>
<dbReference type="GO" id="GO:0030425">
    <property type="term" value="C:dendrite"/>
    <property type="evidence" value="ECO:0007669"/>
    <property type="project" value="UniProtKB-SubCell"/>
</dbReference>
<dbReference type="GO" id="GO:0005789">
    <property type="term" value="C:endoplasmic reticulum membrane"/>
    <property type="evidence" value="ECO:0007669"/>
    <property type="project" value="UniProtKB-SubCell"/>
</dbReference>
<dbReference type="GO" id="GO:0000139">
    <property type="term" value="C:Golgi membrane"/>
    <property type="evidence" value="ECO:0007669"/>
    <property type="project" value="UniProtKB-SubCell"/>
</dbReference>
<dbReference type="GO" id="GO:0045211">
    <property type="term" value="C:postsynaptic membrane"/>
    <property type="evidence" value="ECO:0000318"/>
    <property type="project" value="GO_Central"/>
</dbReference>
<dbReference type="GO" id="GO:0005509">
    <property type="term" value="F:calcium ion binding"/>
    <property type="evidence" value="ECO:0007669"/>
    <property type="project" value="InterPro"/>
</dbReference>
<dbReference type="GO" id="GO:0007156">
    <property type="term" value="P:homophilic cell adhesion via plasma membrane adhesion molecules"/>
    <property type="evidence" value="ECO:0000314"/>
    <property type="project" value="ZFIN"/>
</dbReference>
<dbReference type="GO" id="GO:0051965">
    <property type="term" value="P:positive regulation of synapse assembly"/>
    <property type="evidence" value="ECO:0000318"/>
    <property type="project" value="GO_Central"/>
</dbReference>
<dbReference type="GO" id="GO:0050806">
    <property type="term" value="P:positive regulation of synaptic transmission"/>
    <property type="evidence" value="ECO:0000318"/>
    <property type="project" value="GO_Central"/>
</dbReference>
<dbReference type="CDD" id="cd11304">
    <property type="entry name" value="Cadherin_repeat"/>
    <property type="match status" value="2"/>
</dbReference>
<dbReference type="FunFam" id="2.60.40.60:FF:000025">
    <property type="entry name" value="Calsyntenin 1"/>
    <property type="match status" value="1"/>
</dbReference>
<dbReference type="FunFam" id="2.60.120.200:FF:000029">
    <property type="entry name" value="Calsyntenin 2"/>
    <property type="match status" value="1"/>
</dbReference>
<dbReference type="FunFam" id="2.60.40.60:FF:000062">
    <property type="entry name" value="Calsyntenin 3"/>
    <property type="match status" value="1"/>
</dbReference>
<dbReference type="Gene3D" id="2.60.120.200">
    <property type="match status" value="1"/>
</dbReference>
<dbReference type="Gene3D" id="2.60.40.60">
    <property type="entry name" value="Cadherins"/>
    <property type="match status" value="2"/>
</dbReference>
<dbReference type="InterPro" id="IPR002126">
    <property type="entry name" value="Cadherin-like_dom"/>
</dbReference>
<dbReference type="InterPro" id="IPR015919">
    <property type="entry name" value="Cadherin-like_sf"/>
</dbReference>
<dbReference type="InterPro" id="IPR045588">
    <property type="entry name" value="CLSTN_C"/>
</dbReference>
<dbReference type="InterPro" id="IPR013320">
    <property type="entry name" value="ConA-like_dom_sf"/>
</dbReference>
<dbReference type="PANTHER" id="PTHR14139">
    <property type="entry name" value="CALSYNTENIN"/>
    <property type="match status" value="1"/>
</dbReference>
<dbReference type="PANTHER" id="PTHR14139:SF6">
    <property type="entry name" value="CALSYNTENIN-2 ISOFORM X1-RELATED"/>
    <property type="match status" value="1"/>
</dbReference>
<dbReference type="Pfam" id="PF00028">
    <property type="entry name" value="Cadherin"/>
    <property type="match status" value="1"/>
</dbReference>
<dbReference type="Pfam" id="PF19699">
    <property type="entry name" value="CLSTN_C"/>
    <property type="match status" value="1"/>
</dbReference>
<dbReference type="PRINTS" id="PR00205">
    <property type="entry name" value="CADHERIN"/>
</dbReference>
<dbReference type="SMART" id="SM00112">
    <property type="entry name" value="CA"/>
    <property type="match status" value="2"/>
</dbReference>
<dbReference type="SUPFAM" id="SSF49313">
    <property type="entry name" value="Cadherin-like"/>
    <property type="match status" value="2"/>
</dbReference>
<dbReference type="SUPFAM" id="SSF49899">
    <property type="entry name" value="Concanavalin A-like lectins/glucanases"/>
    <property type="match status" value="1"/>
</dbReference>
<dbReference type="PROSITE" id="PS50268">
    <property type="entry name" value="CADHERIN_2"/>
    <property type="match status" value="2"/>
</dbReference>